<name>DPO4_HALHL</name>
<comment type="function">
    <text evidence="1">Poorly processive, error-prone DNA polymerase involved in untargeted mutagenesis. Copies undamaged DNA at stalled replication forks, which arise in vivo from mismatched or misaligned primer ends. These misaligned primers can be extended by PolIV. Exhibits no 3'-5' exonuclease (proofreading) activity. May be involved in translesional synthesis, in conjunction with the beta clamp from PolIII.</text>
</comment>
<comment type="catalytic activity">
    <reaction evidence="1">
        <text>DNA(n) + a 2'-deoxyribonucleoside 5'-triphosphate = DNA(n+1) + diphosphate</text>
        <dbReference type="Rhea" id="RHEA:22508"/>
        <dbReference type="Rhea" id="RHEA-COMP:17339"/>
        <dbReference type="Rhea" id="RHEA-COMP:17340"/>
        <dbReference type="ChEBI" id="CHEBI:33019"/>
        <dbReference type="ChEBI" id="CHEBI:61560"/>
        <dbReference type="ChEBI" id="CHEBI:173112"/>
        <dbReference type="EC" id="2.7.7.7"/>
    </reaction>
</comment>
<comment type="cofactor">
    <cofactor evidence="1">
        <name>Mg(2+)</name>
        <dbReference type="ChEBI" id="CHEBI:18420"/>
    </cofactor>
    <text evidence="1">Binds 2 magnesium ions per subunit.</text>
</comment>
<comment type="subunit">
    <text evidence="1">Monomer.</text>
</comment>
<comment type="subcellular location">
    <subcellularLocation>
        <location evidence="1">Cytoplasm</location>
    </subcellularLocation>
</comment>
<comment type="similarity">
    <text evidence="1">Belongs to the DNA polymerase type-Y family.</text>
</comment>
<reference key="1">
    <citation type="submission" date="2006-12" db="EMBL/GenBank/DDBJ databases">
        <title>Complete sequence of Halorhodospira halophila SL1.</title>
        <authorList>
            <consortium name="US DOE Joint Genome Institute"/>
            <person name="Copeland A."/>
            <person name="Lucas S."/>
            <person name="Lapidus A."/>
            <person name="Barry K."/>
            <person name="Detter J.C."/>
            <person name="Glavina del Rio T."/>
            <person name="Hammon N."/>
            <person name="Israni S."/>
            <person name="Dalin E."/>
            <person name="Tice H."/>
            <person name="Pitluck S."/>
            <person name="Saunders E."/>
            <person name="Brettin T."/>
            <person name="Bruce D."/>
            <person name="Han C."/>
            <person name="Tapia R."/>
            <person name="Schmutz J."/>
            <person name="Larimer F."/>
            <person name="Land M."/>
            <person name="Hauser L."/>
            <person name="Kyrpides N."/>
            <person name="Mikhailova N."/>
            <person name="Hoff W."/>
            <person name="Richardson P."/>
        </authorList>
    </citation>
    <scope>NUCLEOTIDE SEQUENCE [LARGE SCALE GENOMIC DNA]</scope>
    <source>
        <strain>DSM 244 / SL1</strain>
    </source>
</reference>
<organism>
    <name type="scientific">Halorhodospira halophila (strain DSM 244 / SL1)</name>
    <name type="common">Ectothiorhodospira halophila (strain DSM 244 / SL1)</name>
    <dbReference type="NCBI Taxonomy" id="349124"/>
    <lineage>
        <taxon>Bacteria</taxon>
        <taxon>Pseudomonadati</taxon>
        <taxon>Pseudomonadota</taxon>
        <taxon>Gammaproteobacteria</taxon>
        <taxon>Chromatiales</taxon>
        <taxon>Ectothiorhodospiraceae</taxon>
        <taxon>Halorhodospira</taxon>
    </lineage>
</organism>
<proteinExistence type="inferred from homology"/>
<gene>
    <name evidence="1" type="primary">dinB</name>
    <name type="ordered locus">Hhal_1867</name>
</gene>
<evidence type="ECO:0000255" key="1">
    <source>
        <dbReference type="HAMAP-Rule" id="MF_01113"/>
    </source>
</evidence>
<dbReference type="EC" id="2.7.7.7" evidence="1"/>
<dbReference type="EMBL" id="CP000544">
    <property type="protein sequence ID" value="ABM62631.1"/>
    <property type="molecule type" value="Genomic_DNA"/>
</dbReference>
<dbReference type="RefSeq" id="WP_011814653.1">
    <property type="nucleotide sequence ID" value="NC_008789.1"/>
</dbReference>
<dbReference type="SMR" id="A1WY69"/>
<dbReference type="STRING" id="349124.Hhal_1867"/>
<dbReference type="KEGG" id="hha:Hhal_1867"/>
<dbReference type="eggNOG" id="COG0389">
    <property type="taxonomic scope" value="Bacteria"/>
</dbReference>
<dbReference type="HOGENOM" id="CLU_012348_1_2_6"/>
<dbReference type="OrthoDB" id="9808813at2"/>
<dbReference type="Proteomes" id="UP000000647">
    <property type="component" value="Chromosome"/>
</dbReference>
<dbReference type="GO" id="GO:0005829">
    <property type="term" value="C:cytosol"/>
    <property type="evidence" value="ECO:0007669"/>
    <property type="project" value="TreeGrafter"/>
</dbReference>
<dbReference type="GO" id="GO:0003684">
    <property type="term" value="F:damaged DNA binding"/>
    <property type="evidence" value="ECO:0007669"/>
    <property type="project" value="InterPro"/>
</dbReference>
<dbReference type="GO" id="GO:0003887">
    <property type="term" value="F:DNA-directed DNA polymerase activity"/>
    <property type="evidence" value="ECO:0007669"/>
    <property type="project" value="UniProtKB-UniRule"/>
</dbReference>
<dbReference type="GO" id="GO:0000287">
    <property type="term" value="F:magnesium ion binding"/>
    <property type="evidence" value="ECO:0007669"/>
    <property type="project" value="UniProtKB-UniRule"/>
</dbReference>
<dbReference type="GO" id="GO:0006261">
    <property type="term" value="P:DNA-templated DNA replication"/>
    <property type="evidence" value="ECO:0007669"/>
    <property type="project" value="UniProtKB-UniRule"/>
</dbReference>
<dbReference type="GO" id="GO:0042276">
    <property type="term" value="P:error-prone translesion synthesis"/>
    <property type="evidence" value="ECO:0007669"/>
    <property type="project" value="TreeGrafter"/>
</dbReference>
<dbReference type="GO" id="GO:0009432">
    <property type="term" value="P:SOS response"/>
    <property type="evidence" value="ECO:0007669"/>
    <property type="project" value="TreeGrafter"/>
</dbReference>
<dbReference type="CDD" id="cd03586">
    <property type="entry name" value="PolY_Pol_IV_kappa"/>
    <property type="match status" value="1"/>
</dbReference>
<dbReference type="FunFam" id="3.30.1490.100:FF:000004">
    <property type="entry name" value="DNA polymerase IV"/>
    <property type="match status" value="1"/>
</dbReference>
<dbReference type="FunFam" id="3.40.1170.60:FF:000001">
    <property type="entry name" value="DNA polymerase IV"/>
    <property type="match status" value="1"/>
</dbReference>
<dbReference type="Gene3D" id="3.30.70.270">
    <property type="match status" value="1"/>
</dbReference>
<dbReference type="Gene3D" id="3.40.1170.60">
    <property type="match status" value="1"/>
</dbReference>
<dbReference type="Gene3D" id="1.10.150.20">
    <property type="entry name" value="5' to 3' exonuclease, C-terminal subdomain"/>
    <property type="match status" value="1"/>
</dbReference>
<dbReference type="Gene3D" id="3.30.1490.100">
    <property type="entry name" value="DNA polymerase, Y-family, little finger domain"/>
    <property type="match status" value="1"/>
</dbReference>
<dbReference type="HAMAP" id="MF_01113">
    <property type="entry name" value="DNApol_IV"/>
    <property type="match status" value="1"/>
</dbReference>
<dbReference type="InterPro" id="IPR043502">
    <property type="entry name" value="DNA/RNA_pol_sf"/>
</dbReference>
<dbReference type="InterPro" id="IPR036775">
    <property type="entry name" value="DNA_pol_Y-fam_lit_finger_sf"/>
</dbReference>
<dbReference type="InterPro" id="IPR017961">
    <property type="entry name" value="DNA_pol_Y-fam_little_finger"/>
</dbReference>
<dbReference type="InterPro" id="IPR050116">
    <property type="entry name" value="DNA_polymerase-Y"/>
</dbReference>
<dbReference type="InterPro" id="IPR022880">
    <property type="entry name" value="DNApol_IV"/>
</dbReference>
<dbReference type="InterPro" id="IPR053848">
    <property type="entry name" value="IMS_HHH_1"/>
</dbReference>
<dbReference type="InterPro" id="IPR043128">
    <property type="entry name" value="Rev_trsase/Diguanyl_cyclase"/>
</dbReference>
<dbReference type="InterPro" id="IPR001126">
    <property type="entry name" value="UmuC"/>
</dbReference>
<dbReference type="NCBIfam" id="NF002677">
    <property type="entry name" value="PRK02406.1"/>
    <property type="match status" value="1"/>
</dbReference>
<dbReference type="PANTHER" id="PTHR11076:SF33">
    <property type="entry name" value="DNA POLYMERASE KAPPA"/>
    <property type="match status" value="1"/>
</dbReference>
<dbReference type="PANTHER" id="PTHR11076">
    <property type="entry name" value="DNA REPAIR POLYMERASE UMUC / TRANSFERASE FAMILY MEMBER"/>
    <property type="match status" value="1"/>
</dbReference>
<dbReference type="Pfam" id="PF00817">
    <property type="entry name" value="IMS"/>
    <property type="match status" value="1"/>
</dbReference>
<dbReference type="Pfam" id="PF11799">
    <property type="entry name" value="IMS_C"/>
    <property type="match status" value="1"/>
</dbReference>
<dbReference type="Pfam" id="PF21999">
    <property type="entry name" value="IMS_HHH_1"/>
    <property type="match status" value="1"/>
</dbReference>
<dbReference type="SUPFAM" id="SSF56672">
    <property type="entry name" value="DNA/RNA polymerases"/>
    <property type="match status" value="1"/>
</dbReference>
<dbReference type="SUPFAM" id="SSF100879">
    <property type="entry name" value="Lesion bypass DNA polymerase (Y-family), little finger domain"/>
    <property type="match status" value="1"/>
</dbReference>
<dbReference type="PROSITE" id="PS50173">
    <property type="entry name" value="UMUC"/>
    <property type="match status" value="1"/>
</dbReference>
<protein>
    <recommendedName>
        <fullName evidence="1">DNA polymerase IV</fullName>
        <shortName evidence="1">Pol IV</shortName>
        <ecNumber evidence="1">2.7.7.7</ecNumber>
    </recommendedName>
</protein>
<feature type="chain" id="PRO_1000164004" description="DNA polymerase IV">
    <location>
        <begin position="1"/>
        <end position="356"/>
    </location>
</feature>
<feature type="domain" description="UmuC" evidence="1">
    <location>
        <begin position="6"/>
        <end position="187"/>
    </location>
</feature>
<feature type="active site" evidence="1">
    <location>
        <position position="106"/>
    </location>
</feature>
<feature type="binding site" evidence="1">
    <location>
        <position position="10"/>
    </location>
    <ligand>
        <name>Mg(2+)</name>
        <dbReference type="ChEBI" id="CHEBI:18420"/>
    </ligand>
</feature>
<feature type="binding site" evidence="1">
    <location>
        <position position="105"/>
    </location>
    <ligand>
        <name>Mg(2+)</name>
        <dbReference type="ChEBI" id="CHEBI:18420"/>
    </ligand>
</feature>
<feature type="site" description="Substrate discrimination" evidence="1">
    <location>
        <position position="15"/>
    </location>
</feature>
<accession>A1WY69</accession>
<sequence length="356" mass="39218">MTWRKIIHIDMDAFYASVEQRDDPSLRGQPVVVGGSPEGRGVVAAASYEARAFGIRSAQPAAWARRRCPEAIFLRPRFDRYRAISRQIHGIFADFATTIEPLSLDEAYLDVTGSQRFRGSATHMAQAIRRRIREETGLTASAGVSYNKLLAKLASDEGKPDGLYVVPPEDGPAYVAAQPIRRLHGVGPATAARLERLGIRQVGDLLDWELADLHVFLGNRAGTLHDAARGIDHRPVRPRRSRKSIGAERTFGDDTRDLGEIHQRLAPLITKVATRLEHHELVARTVTLKLRYADFESITRRVSPPGPVAQAADIEALIPALLAETEAGSRPVRLLGVSLSGLQPKQREQDLFSALT</sequence>
<keyword id="KW-0963">Cytoplasm</keyword>
<keyword id="KW-0227">DNA damage</keyword>
<keyword id="KW-0234">DNA repair</keyword>
<keyword id="KW-0235">DNA replication</keyword>
<keyword id="KW-0238">DNA-binding</keyword>
<keyword id="KW-0239">DNA-directed DNA polymerase</keyword>
<keyword id="KW-0460">Magnesium</keyword>
<keyword id="KW-0479">Metal-binding</keyword>
<keyword id="KW-0515">Mutator protein</keyword>
<keyword id="KW-0548">Nucleotidyltransferase</keyword>
<keyword id="KW-1185">Reference proteome</keyword>
<keyword id="KW-0808">Transferase</keyword>